<name>TPM1_PODCA</name>
<accession>P41114</accession>
<sequence>MDAIKKKMSAMKTKLEEADKQAQDAEDELTATLEKAAETEQTADELQKTLADLEDELDAAESRLTSLTEKYNEEEKKAEEGRRAHKELENRGQTDYSRLNRLETELAEITEQNEVVVEKLSELSSQLEENERILDEEEERCATADAQVKELEVDVVQVGNQLRSMEINEEKASKSNDQSANKLEDTIEKYNTIKDRADDAEARSRDLEAELNECDDELAAAKEAYGQSKADMDELLLELASM</sequence>
<proteinExistence type="evidence at transcript level"/>
<organism>
    <name type="scientific">Podocoryna carnea</name>
    <name type="common">Hydrozoan</name>
    <dbReference type="NCBI Taxonomy" id="6096"/>
    <lineage>
        <taxon>Eukaryota</taxon>
        <taxon>Metazoa</taxon>
        <taxon>Cnidaria</taxon>
        <taxon>Hydrozoa</taxon>
        <taxon>Hydroidolina</taxon>
        <taxon>Anthoathecata</taxon>
        <taxon>Filifera</taxon>
        <taxon>Hydractiniidae</taxon>
        <taxon>Podocoryna</taxon>
    </lineage>
</organism>
<gene>
    <name type="primary">TPM1</name>
</gene>
<dbReference type="EMBL" id="X71418">
    <property type="protein sequence ID" value="CAA50550.1"/>
    <property type="molecule type" value="mRNA"/>
</dbReference>
<dbReference type="PIR" id="S35060">
    <property type="entry name" value="S35060"/>
</dbReference>
<dbReference type="SMR" id="P41114"/>
<dbReference type="Gene3D" id="1.20.5.170">
    <property type="match status" value="1"/>
</dbReference>
<dbReference type="Gene3D" id="1.20.5.340">
    <property type="match status" value="1"/>
</dbReference>
<dbReference type="InterPro" id="IPR000533">
    <property type="entry name" value="Tropomyosin"/>
</dbReference>
<dbReference type="PANTHER" id="PTHR19269">
    <property type="entry name" value="TROPOMYOSIN"/>
    <property type="match status" value="1"/>
</dbReference>
<dbReference type="Pfam" id="PF00261">
    <property type="entry name" value="Tropomyosin"/>
    <property type="match status" value="1"/>
</dbReference>
<dbReference type="SUPFAM" id="SSF57997">
    <property type="entry name" value="Tropomyosin"/>
    <property type="match status" value="1"/>
</dbReference>
<feature type="chain" id="PRO_0000205660" description="Tropomyosin-1">
    <location>
        <begin position="1"/>
        <end position="242"/>
    </location>
</feature>
<feature type="region of interest" description="Disordered" evidence="2">
    <location>
        <begin position="1"/>
        <end position="31"/>
    </location>
</feature>
<feature type="region of interest" description="Disordered" evidence="2">
    <location>
        <begin position="65"/>
        <end position="96"/>
    </location>
</feature>
<feature type="coiled-coil region" evidence="1">
    <location>
        <begin position="1"/>
        <end position="242"/>
    </location>
</feature>
<feature type="compositionally biased region" description="Basic and acidic residues" evidence="2">
    <location>
        <begin position="13"/>
        <end position="23"/>
    </location>
</feature>
<feature type="compositionally biased region" description="Basic and acidic residues" evidence="2">
    <location>
        <begin position="70"/>
        <end position="96"/>
    </location>
</feature>
<reference key="1">
    <citation type="journal article" date="1993" name="FEBS Lett.">
        <title>Characterization of a tropomyosin cDNA from the hydrozoan Podocoryne carnea.</title>
        <authorList>
            <person name="Baader C.D."/>
            <person name="Schmid V."/>
            <person name="Schuchert P."/>
        </authorList>
    </citation>
    <scope>NUCLEOTIDE SEQUENCE [MRNA]</scope>
</reference>
<evidence type="ECO:0000250" key="1"/>
<evidence type="ECO:0000256" key="2">
    <source>
        <dbReference type="SAM" id="MobiDB-lite"/>
    </source>
</evidence>
<evidence type="ECO:0000305" key="3"/>
<protein>
    <recommendedName>
        <fullName>Tropomyosin-1</fullName>
    </recommendedName>
</protein>
<comment type="subunit">
    <text evidence="1">Homodimer.</text>
</comment>
<comment type="tissue specificity">
    <text>Expressed ubiquitously.</text>
</comment>
<comment type="developmental stage">
    <text>In the polyp and the medusa stages.</text>
</comment>
<comment type="domain">
    <text>The molecule is in a coiled coil structure that is formed by 2 polypeptide chains. The sequence exhibits a prominent seven-residues periodicity.</text>
</comment>
<comment type="similarity">
    <text evidence="3">Belongs to the tropomyosin family.</text>
</comment>
<keyword id="KW-0175">Coiled coil</keyword>
<keyword id="KW-0677">Repeat</keyword>